<dbReference type="EMBL" id="AB010722">
    <property type="protein sequence ID" value="BAA31474.1"/>
    <property type="molecule type" value="Genomic_DNA"/>
</dbReference>
<dbReference type="RefSeq" id="WP_042457995.1">
    <property type="nucleotide sequence ID" value="NZ_MSYR01000001.1"/>
</dbReference>
<dbReference type="SMR" id="O82868"/>
<dbReference type="STRING" id="35806.A6024_03500"/>
<dbReference type="eggNOG" id="COG4567">
    <property type="taxonomic scope" value="Bacteria"/>
</dbReference>
<dbReference type="OrthoDB" id="9802426at2"/>
<dbReference type="GO" id="GO:0043565">
    <property type="term" value="F:sequence-specific DNA binding"/>
    <property type="evidence" value="ECO:0007669"/>
    <property type="project" value="InterPro"/>
</dbReference>
<dbReference type="GO" id="GO:0000160">
    <property type="term" value="P:phosphorelay signal transduction system"/>
    <property type="evidence" value="ECO:0007669"/>
    <property type="project" value="UniProtKB-KW"/>
</dbReference>
<dbReference type="CDD" id="cd17563">
    <property type="entry name" value="REC_RegA-like"/>
    <property type="match status" value="1"/>
</dbReference>
<dbReference type="FunFam" id="1.10.10.60:FF:000036">
    <property type="entry name" value="Two-component system response regulator"/>
    <property type="match status" value="1"/>
</dbReference>
<dbReference type="FunFam" id="3.40.50.2300:FF:000205">
    <property type="entry name" value="Two-component system response regulator"/>
    <property type="match status" value="1"/>
</dbReference>
<dbReference type="Gene3D" id="3.40.50.2300">
    <property type="match status" value="1"/>
</dbReference>
<dbReference type="Gene3D" id="1.10.10.60">
    <property type="entry name" value="Homeodomain-like"/>
    <property type="match status" value="1"/>
</dbReference>
<dbReference type="InterPro" id="IPR047772">
    <property type="entry name" value="ActR_PrrA_rreg"/>
</dbReference>
<dbReference type="InterPro" id="IPR050595">
    <property type="entry name" value="Bact_response_regulator"/>
</dbReference>
<dbReference type="InterPro" id="IPR011006">
    <property type="entry name" value="CheY-like_superfamily"/>
</dbReference>
<dbReference type="InterPro" id="IPR002197">
    <property type="entry name" value="HTH_Fis"/>
</dbReference>
<dbReference type="InterPro" id="IPR001789">
    <property type="entry name" value="Sig_transdc_resp-reg_receiver"/>
</dbReference>
<dbReference type="NCBIfam" id="NF033791">
    <property type="entry name" value="ActR_PrrA_rreg"/>
    <property type="match status" value="1"/>
</dbReference>
<dbReference type="PANTHER" id="PTHR44591:SF14">
    <property type="entry name" value="PROTEIN PILG"/>
    <property type="match status" value="1"/>
</dbReference>
<dbReference type="PANTHER" id="PTHR44591">
    <property type="entry name" value="STRESS RESPONSE REGULATOR PROTEIN 1"/>
    <property type="match status" value="1"/>
</dbReference>
<dbReference type="Pfam" id="PF02954">
    <property type="entry name" value="HTH_8"/>
    <property type="match status" value="1"/>
</dbReference>
<dbReference type="Pfam" id="PF00072">
    <property type="entry name" value="Response_reg"/>
    <property type="match status" value="1"/>
</dbReference>
<dbReference type="SMART" id="SM00448">
    <property type="entry name" value="REC"/>
    <property type="match status" value="1"/>
</dbReference>
<dbReference type="SUPFAM" id="SSF52172">
    <property type="entry name" value="CheY-like"/>
    <property type="match status" value="1"/>
</dbReference>
<dbReference type="PROSITE" id="PS50110">
    <property type="entry name" value="RESPONSE_REGULATORY"/>
    <property type="match status" value="1"/>
</dbReference>
<sequence>MAEQEYEIGEDPSLLIVDDDEPFLRRLARAMEKRGFQPEMAETVAAGKAIASARPPAYAVVDLRLEDGTGLDVVETLREKRPDAKIVVLTGYGAIATAVAAVKVGATDYLSKPADANDVTAALLSNGEALPPPPENPMSADRVRWEHIQRVYEQCDRNVSETARRLNMHRRTLQRILAKRSPR</sequence>
<comment type="function">
    <text evidence="1">Member of the two-component regulatory system RegB/RegA. Involved in transactivating anaerobic expression of the photosynthetic apparatus. It is a transcriptional regulator that is responsible for activating expression of the puf, puh, and puc operons in response to a decrease in oxygen tension (By similarity).</text>
</comment>
<comment type="PTM">
    <text evidence="3">Phosphorylated by RegB.</text>
</comment>
<proteinExistence type="inferred from homology"/>
<reference key="1">
    <citation type="submission" date="1998-01" db="EMBL/GenBank/DDBJ databases">
        <title>Rhodovulum sulfidophilum photosynthetic regulatory genes.</title>
        <authorList>
            <person name="Masuda S."/>
        </authorList>
    </citation>
    <scope>NUCLEOTIDE SEQUENCE [GENOMIC DNA]</scope>
</reference>
<protein>
    <recommendedName>
        <fullName>Photosynthetic apparatus regulatory protein RegA</fullName>
    </recommendedName>
</protein>
<gene>
    <name type="primary">regA</name>
</gene>
<organism>
    <name type="scientific">Rhodovulum sulfidophilum</name>
    <name type="common">Rhodobacter sulfidophilus</name>
    <dbReference type="NCBI Taxonomy" id="35806"/>
    <lineage>
        <taxon>Bacteria</taxon>
        <taxon>Pseudomonadati</taxon>
        <taxon>Pseudomonadota</taxon>
        <taxon>Alphaproteobacteria</taxon>
        <taxon>Rhodobacterales</taxon>
        <taxon>Paracoccaceae</taxon>
        <taxon>Rhodovulum</taxon>
    </lineage>
</organism>
<accession>O82868</accession>
<feature type="chain" id="PRO_0000081217" description="Photosynthetic apparatus regulatory protein RegA">
    <location>
        <begin position="1"/>
        <end position="183"/>
    </location>
</feature>
<feature type="domain" description="Response regulatory" evidence="2">
    <location>
        <begin position="13"/>
        <end position="127"/>
    </location>
</feature>
<feature type="modified residue" description="4-aspartylphosphate" evidence="2">
    <location>
        <position position="62"/>
    </location>
</feature>
<keyword id="KW-0010">Activator</keyword>
<keyword id="KW-0238">DNA-binding</keyword>
<keyword id="KW-0597">Phosphoprotein</keyword>
<keyword id="KW-0804">Transcription</keyword>
<keyword id="KW-0805">Transcription regulation</keyword>
<keyword id="KW-0902">Two-component regulatory system</keyword>
<name>REGA_RHOSU</name>
<evidence type="ECO:0000250" key="1"/>
<evidence type="ECO:0000255" key="2">
    <source>
        <dbReference type="PROSITE-ProRule" id="PRU00169"/>
    </source>
</evidence>
<evidence type="ECO:0000305" key="3"/>